<protein>
    <recommendedName>
        <fullName>Cytidine and dCMP deaminase domain-containing protein 1</fullName>
        <ecNumber evidence="1">3.5.4.5</ecNumber>
    </recommendedName>
    <alternativeName>
        <fullName evidence="5">Cytidine deaminase</fullName>
    </alternativeName>
</protein>
<dbReference type="EC" id="3.5.4.5" evidence="1"/>
<dbReference type="EMBL" id="AB169306">
    <property type="protein sequence ID" value="BAE01392.1"/>
    <property type="molecule type" value="mRNA"/>
</dbReference>
<dbReference type="RefSeq" id="NP_001272023.1">
    <property type="nucleotide sequence ID" value="NM_001285094.1"/>
</dbReference>
<dbReference type="RefSeq" id="XP_045232997.1">
    <property type="nucleotide sequence ID" value="XM_045377062.2"/>
</dbReference>
<dbReference type="SMR" id="Q4R683"/>
<dbReference type="STRING" id="9541.ENSMFAP00000020007"/>
<dbReference type="Ensembl" id="ENSMFAT00000070562.2">
    <property type="protein sequence ID" value="ENSMFAP00000020007.1"/>
    <property type="gene ID" value="ENSMFAG00000032976.2"/>
</dbReference>
<dbReference type="GeneID" id="101866199"/>
<dbReference type="VEuPathDB" id="HostDB:ENSMFAG00000032976"/>
<dbReference type="eggNOG" id="KOG3127">
    <property type="taxonomic scope" value="Eukaryota"/>
</dbReference>
<dbReference type="GeneTree" id="ENSGT00940000153676"/>
<dbReference type="OMA" id="ITHIYTT"/>
<dbReference type="Proteomes" id="UP000233100">
    <property type="component" value="Chromosome 17"/>
</dbReference>
<dbReference type="Bgee" id="ENSMFAG00000032976">
    <property type="expression patterns" value="Expressed in bone marrow and 13 other cell types or tissues"/>
</dbReference>
<dbReference type="GO" id="GO:0005737">
    <property type="term" value="C:cytoplasm"/>
    <property type="evidence" value="ECO:0007669"/>
    <property type="project" value="UniProtKB-SubCell"/>
</dbReference>
<dbReference type="GO" id="GO:0005634">
    <property type="term" value="C:nucleus"/>
    <property type="evidence" value="ECO:0007669"/>
    <property type="project" value="UniProtKB-SubCell"/>
</dbReference>
<dbReference type="GO" id="GO:0004126">
    <property type="term" value="F:cytidine deaminase activity"/>
    <property type="evidence" value="ECO:0007669"/>
    <property type="project" value="UniProtKB-EC"/>
</dbReference>
<dbReference type="GO" id="GO:0004132">
    <property type="term" value="F:dCMP deaminase activity"/>
    <property type="evidence" value="ECO:0007669"/>
    <property type="project" value="TreeGrafter"/>
</dbReference>
<dbReference type="GO" id="GO:0061676">
    <property type="term" value="F:importin-alpha family protein binding"/>
    <property type="evidence" value="ECO:0007669"/>
    <property type="project" value="Ensembl"/>
</dbReference>
<dbReference type="GO" id="GO:0042803">
    <property type="term" value="F:protein homodimerization activity"/>
    <property type="evidence" value="ECO:0007669"/>
    <property type="project" value="Ensembl"/>
</dbReference>
<dbReference type="GO" id="GO:0008270">
    <property type="term" value="F:zinc ion binding"/>
    <property type="evidence" value="ECO:0007669"/>
    <property type="project" value="Ensembl"/>
</dbReference>
<dbReference type="GO" id="GO:0009972">
    <property type="term" value="P:cytidine deamination"/>
    <property type="evidence" value="ECO:0007669"/>
    <property type="project" value="Ensembl"/>
</dbReference>
<dbReference type="GO" id="GO:0070383">
    <property type="term" value="P:DNA cytosine deamination"/>
    <property type="evidence" value="ECO:0007669"/>
    <property type="project" value="Ensembl"/>
</dbReference>
<dbReference type="CDD" id="cd01286">
    <property type="entry name" value="deoxycytidylate_deaminase"/>
    <property type="match status" value="1"/>
</dbReference>
<dbReference type="FunFam" id="3.40.140.10:FF:000028">
    <property type="entry name" value="Cytidine and dCMP deaminase domain containing 1"/>
    <property type="match status" value="1"/>
</dbReference>
<dbReference type="FunFam" id="3.40.140.10:FF:000030">
    <property type="entry name" value="Cytidine and dCMP deaminase domain-containing protein 1"/>
    <property type="match status" value="1"/>
</dbReference>
<dbReference type="Gene3D" id="3.40.140.10">
    <property type="entry name" value="Cytidine Deaminase, domain 2"/>
    <property type="match status" value="2"/>
</dbReference>
<dbReference type="InterPro" id="IPR016192">
    <property type="entry name" value="APOBEC/CMP_deaminase_Zn-bd"/>
</dbReference>
<dbReference type="InterPro" id="IPR002125">
    <property type="entry name" value="CMP_dCMP_dom"/>
</dbReference>
<dbReference type="InterPro" id="IPR016193">
    <property type="entry name" value="Cytidine_deaminase-like"/>
</dbReference>
<dbReference type="InterPro" id="IPR015517">
    <property type="entry name" value="dCMP_deaminase-rel"/>
</dbReference>
<dbReference type="InterPro" id="IPR035105">
    <property type="entry name" value="Deoxycytidylate_deaminase_dom"/>
</dbReference>
<dbReference type="PANTHER" id="PTHR11086:SF14">
    <property type="entry name" value="CYTIDINE AND DCMP DEAMINASE DOMAIN-CONTAINING PROTEIN 1"/>
    <property type="match status" value="1"/>
</dbReference>
<dbReference type="PANTHER" id="PTHR11086">
    <property type="entry name" value="DEOXYCYTIDYLATE DEAMINASE-RELATED"/>
    <property type="match status" value="1"/>
</dbReference>
<dbReference type="Pfam" id="PF00383">
    <property type="entry name" value="dCMP_cyt_deam_1"/>
    <property type="match status" value="2"/>
</dbReference>
<dbReference type="SUPFAM" id="SSF53927">
    <property type="entry name" value="Cytidine deaminase-like"/>
    <property type="match status" value="2"/>
</dbReference>
<dbReference type="PROSITE" id="PS00903">
    <property type="entry name" value="CYT_DCMP_DEAMINASES_1"/>
    <property type="match status" value="1"/>
</dbReference>
<dbReference type="PROSITE" id="PS51747">
    <property type="entry name" value="CYT_DCMP_DEAMINASES_2"/>
    <property type="match status" value="2"/>
</dbReference>
<sequence>MKEAGQMQNLESARAGRSVSTQTGSMTGQIPRLSKVNLFTLLSLWMELFPAVEAQRQKSQKNEEGKHGPLGDNEEMTRVSTDKRQVKRTGLVVVKNMKIVGLHCSSEDLHAGQIALIKHGSRLKNCDLYFSRKPCSACLKMIVNAGVNRISYWPADPEISLLTEASSSEDAKLDAKAVERLKSNSRAHVCVLLQPLVCYMVQFVEETSYKCDFIQKITKTLPDANTDFYYECKQERIKEYEMLFLVSNEEMHKQILMTIGLENLCENPYFSNLRQNMKDLILLLATVASSVPNFKHFGFYCSNPEQINEIHNQSLPQEIARHCMVQARLLAYRTEDHKTGVGAVIWAEGKSRSCDGTGAMYFVGCGYNAFPVGSEYADFPHMDDKQKDREIRKFRYIIHAEQNALTFRCQEIKPEERSMIFVTKCPCDECVPLIKGAGIKQIYAGDVDVGKKKADISYMRFGELEGVSKFTWQLNPSEAYGLEQNEPERRENGVLRPVPQKEEQHQDKKLRLGIH</sequence>
<organism>
    <name type="scientific">Macaca fascicularis</name>
    <name type="common">Crab-eating macaque</name>
    <name type="synonym">Cynomolgus monkey</name>
    <dbReference type="NCBI Taxonomy" id="9541"/>
    <lineage>
        <taxon>Eukaryota</taxon>
        <taxon>Metazoa</taxon>
        <taxon>Chordata</taxon>
        <taxon>Craniata</taxon>
        <taxon>Vertebrata</taxon>
        <taxon>Euteleostomi</taxon>
        <taxon>Mammalia</taxon>
        <taxon>Eutheria</taxon>
        <taxon>Euarchontoglires</taxon>
        <taxon>Primates</taxon>
        <taxon>Haplorrhini</taxon>
        <taxon>Catarrhini</taxon>
        <taxon>Cercopithecidae</taxon>
        <taxon>Cercopithecinae</taxon>
        <taxon>Macaca</taxon>
    </lineage>
</organism>
<feature type="chain" id="PRO_0000300492" description="Cytidine and dCMP deaminase domain-containing protein 1">
    <location>
        <begin position="1"/>
        <end position="515"/>
    </location>
</feature>
<feature type="domain" description="CMP/dCMP-type deaminase 1" evidence="3">
    <location>
        <begin position="71"/>
        <end position="169"/>
    </location>
</feature>
<feature type="domain" description="CMP/dCMP-type deaminase 2" evidence="3">
    <location>
        <begin position="318"/>
        <end position="483"/>
    </location>
</feature>
<feature type="region of interest" description="Disordered" evidence="4">
    <location>
        <begin position="1"/>
        <end position="27"/>
    </location>
</feature>
<feature type="region of interest" description="Disordered" evidence="4">
    <location>
        <begin position="56"/>
        <end position="83"/>
    </location>
</feature>
<feature type="region of interest" description="Disordered" evidence="4">
    <location>
        <begin position="481"/>
        <end position="515"/>
    </location>
</feature>
<feature type="short sequence motif" description="Nuclear export signal" evidence="1">
    <location>
        <begin position="272"/>
        <end position="284"/>
    </location>
</feature>
<feature type="short sequence motif" description="Bipartite nuclear localization signal" evidence="1">
    <location>
        <begin position="489"/>
        <end position="511"/>
    </location>
</feature>
<feature type="compositionally biased region" description="Polar residues" evidence="4">
    <location>
        <begin position="1"/>
        <end position="11"/>
    </location>
</feature>
<feature type="compositionally biased region" description="Polar residues" evidence="4">
    <location>
        <begin position="18"/>
        <end position="27"/>
    </location>
</feature>
<feature type="compositionally biased region" description="Basic and acidic residues" evidence="4">
    <location>
        <begin position="60"/>
        <end position="83"/>
    </location>
</feature>
<feature type="compositionally biased region" description="Basic and acidic residues" evidence="4">
    <location>
        <begin position="486"/>
        <end position="515"/>
    </location>
</feature>
<feature type="active site" description="Proton donor" evidence="3">
    <location>
        <position position="401"/>
    </location>
</feature>
<feature type="binding site" evidence="3">
    <location>
        <position position="110"/>
    </location>
    <ligand>
        <name>Zn(2+)</name>
        <dbReference type="ChEBI" id="CHEBI:29105"/>
        <label>1</label>
    </ligand>
</feature>
<feature type="binding site" evidence="3">
    <location>
        <position position="135"/>
    </location>
    <ligand>
        <name>Zn(2+)</name>
        <dbReference type="ChEBI" id="CHEBI:29105"/>
        <label>1</label>
    </ligand>
</feature>
<feature type="binding site" evidence="3">
    <location>
        <position position="138"/>
    </location>
    <ligand>
        <name>Zn(2+)</name>
        <dbReference type="ChEBI" id="CHEBI:29105"/>
        <label>1</label>
    </ligand>
</feature>
<feature type="binding site" evidence="3">
    <location>
        <position position="399"/>
    </location>
    <ligand>
        <name>Zn(2+)</name>
        <dbReference type="ChEBI" id="CHEBI:29105"/>
        <label>2</label>
        <note>catalytic</note>
    </ligand>
</feature>
<feature type="binding site" evidence="3">
    <location>
        <position position="427"/>
    </location>
    <ligand>
        <name>Zn(2+)</name>
        <dbReference type="ChEBI" id="CHEBI:29105"/>
        <label>2</label>
        <note>catalytic</note>
    </ligand>
</feature>
<feature type="binding site" evidence="3">
    <location>
        <position position="430"/>
    </location>
    <ligand>
        <name>Zn(2+)</name>
        <dbReference type="ChEBI" id="CHEBI:29105"/>
        <label>2</label>
        <note>catalytic</note>
    </ligand>
</feature>
<keyword id="KW-0963">Cytoplasm</keyword>
<keyword id="KW-0378">Hydrolase</keyword>
<keyword id="KW-0479">Metal-binding</keyword>
<keyword id="KW-0539">Nucleus</keyword>
<keyword id="KW-1185">Reference proteome</keyword>
<keyword id="KW-0677">Repeat</keyword>
<keyword id="KW-0862">Zinc</keyword>
<gene>
    <name type="primary">CDADC1</name>
    <name type="ORF">QtsA-18829</name>
</gene>
<evidence type="ECO:0000250" key="1">
    <source>
        <dbReference type="UniProtKB" id="Q9BWV3"/>
    </source>
</evidence>
<evidence type="ECO:0000250" key="2">
    <source>
        <dbReference type="UniProtKB" id="Q9GZX7"/>
    </source>
</evidence>
<evidence type="ECO:0000255" key="3">
    <source>
        <dbReference type="PROSITE-ProRule" id="PRU01083"/>
    </source>
</evidence>
<evidence type="ECO:0000256" key="4">
    <source>
        <dbReference type="SAM" id="MobiDB-lite"/>
    </source>
</evidence>
<evidence type="ECO:0000305" key="5"/>
<name>CDAC1_MACFA</name>
<reference key="1">
    <citation type="submission" date="2005-06" db="EMBL/GenBank/DDBJ databases">
        <title>DNA sequences of macaque genes expressed in brain or testis and its evolutionary implications.</title>
        <authorList>
            <consortium name="International consortium for macaque cDNA sequencing and analysis"/>
        </authorList>
    </citation>
    <scope>NUCLEOTIDE SEQUENCE [LARGE SCALE MRNA]</scope>
    <source>
        <tissue>Testis</tissue>
    </source>
</reference>
<proteinExistence type="evidence at transcript level"/>
<accession>Q4R683</accession>
<comment type="function">
    <text evidence="1">Catalyzes the deamination of cytidine and deoxycytidine into uridine and deoxyuridine, respectively. May play an important role in testicular development and spermatogenesis.</text>
</comment>
<comment type="catalytic activity">
    <reaction evidence="1">
        <text>2'-deoxycytidine + H2O + H(+) = 2'-deoxyuridine + NH4(+)</text>
        <dbReference type="Rhea" id="RHEA:13433"/>
        <dbReference type="ChEBI" id="CHEBI:15377"/>
        <dbReference type="ChEBI" id="CHEBI:15378"/>
        <dbReference type="ChEBI" id="CHEBI:15698"/>
        <dbReference type="ChEBI" id="CHEBI:16450"/>
        <dbReference type="ChEBI" id="CHEBI:28938"/>
        <dbReference type="EC" id="3.5.4.5"/>
    </reaction>
</comment>
<comment type="catalytic activity">
    <reaction evidence="1">
        <text>cytidine + H2O + H(+) = uridine + NH4(+)</text>
        <dbReference type="Rhea" id="RHEA:16069"/>
        <dbReference type="ChEBI" id="CHEBI:15377"/>
        <dbReference type="ChEBI" id="CHEBI:15378"/>
        <dbReference type="ChEBI" id="CHEBI:16704"/>
        <dbReference type="ChEBI" id="CHEBI:17562"/>
        <dbReference type="ChEBI" id="CHEBI:28938"/>
        <dbReference type="EC" id="3.5.4.5"/>
    </reaction>
</comment>
<comment type="cofactor">
    <cofactor evidence="2">
        <name>Zn(2+)</name>
        <dbReference type="ChEBI" id="CHEBI:29105"/>
    </cofactor>
</comment>
<comment type="subcellular location">
    <subcellularLocation>
        <location evidence="1">Cytoplasm</location>
    </subcellularLocation>
    <subcellularLocation>
        <location evidence="1">Nucleus</location>
    </subcellularLocation>
</comment>
<comment type="similarity">
    <text evidence="5">Belongs to the cytidine and deoxycytidylate deaminase family.</text>
</comment>